<organism>
    <name type="scientific">Cyanophora paradoxa</name>
    <dbReference type="NCBI Taxonomy" id="2762"/>
    <lineage>
        <taxon>Eukaryota</taxon>
        <taxon>Glaucocystophyceae</taxon>
        <taxon>Cyanophoraceae</taxon>
        <taxon>Cyanophora</taxon>
    </lineage>
</organism>
<comment type="function">
    <text evidence="1">IGPS catalyzes the conversion of PRFAR and glutamine to IGP, AICAR and glutamate. The HisH subunit catalyzes the hydrolysis of glutamine to glutamate and ammonia as part of the synthesis of IGP and AICAR. The resulting ammonia molecule is channeled to the active site of HisF (By similarity).</text>
</comment>
<comment type="catalytic activity">
    <reaction>
        <text>5-[(5-phospho-1-deoxy-D-ribulos-1-ylimino)methylamino]-1-(5-phospho-beta-D-ribosyl)imidazole-4-carboxamide + L-glutamine = D-erythro-1-(imidazol-4-yl)glycerol 3-phosphate + 5-amino-1-(5-phospho-beta-D-ribosyl)imidazole-4-carboxamide + L-glutamate + H(+)</text>
        <dbReference type="Rhea" id="RHEA:24793"/>
        <dbReference type="ChEBI" id="CHEBI:15378"/>
        <dbReference type="ChEBI" id="CHEBI:29985"/>
        <dbReference type="ChEBI" id="CHEBI:58278"/>
        <dbReference type="ChEBI" id="CHEBI:58359"/>
        <dbReference type="ChEBI" id="CHEBI:58475"/>
        <dbReference type="ChEBI" id="CHEBI:58525"/>
        <dbReference type="EC" id="4.3.2.10"/>
    </reaction>
</comment>
<comment type="catalytic activity">
    <reaction>
        <text>L-glutamine + H2O = L-glutamate + NH4(+)</text>
        <dbReference type="Rhea" id="RHEA:15889"/>
        <dbReference type="ChEBI" id="CHEBI:15377"/>
        <dbReference type="ChEBI" id="CHEBI:28938"/>
        <dbReference type="ChEBI" id="CHEBI:29985"/>
        <dbReference type="ChEBI" id="CHEBI:58359"/>
        <dbReference type="EC" id="3.5.1.2"/>
    </reaction>
</comment>
<comment type="pathway">
    <text>Amino-acid biosynthesis; L-histidine biosynthesis; L-histidine from 5-phospho-alpha-D-ribose 1-diphosphate: step 5/9.</text>
</comment>
<comment type="subunit">
    <text evidence="1">Heterodimer of hisH and hisF.</text>
</comment>
<comment type="subcellular location">
    <subcellularLocation>
        <location>Plastid</location>
        <location>Cyanelle</location>
    </subcellularLocation>
</comment>
<protein>
    <recommendedName>
        <fullName>Imidazole glycerol phosphate synthase subunit hisH</fullName>
        <ecNumber>4.3.2.10</ecNumber>
    </recommendedName>
    <alternativeName>
        <fullName>IGP synthase glutaminase subunit</fullName>
        <ecNumber>3.5.1.2</ecNumber>
    </alternativeName>
    <alternativeName>
        <fullName>IGP synthase subunit hisH</fullName>
    </alternativeName>
    <alternativeName>
        <fullName>ImGP synthase subunit hisH</fullName>
        <shortName>IGPS subunit hisH</shortName>
    </alternativeName>
</protein>
<dbReference type="EC" id="4.3.2.10"/>
<dbReference type="EC" id="3.5.1.2"/>
<dbReference type="EMBL" id="U30821">
    <property type="protein sequence ID" value="AAA81252.1"/>
    <property type="molecule type" value="Genomic_DNA"/>
</dbReference>
<dbReference type="PIR" id="T06909">
    <property type="entry name" value="T06909"/>
</dbReference>
<dbReference type="RefSeq" id="NP_043221.1">
    <property type="nucleotide sequence ID" value="NC_001675.1"/>
</dbReference>
<dbReference type="SMR" id="P48262"/>
<dbReference type="GeneID" id="801530"/>
<dbReference type="UniPathway" id="UPA00031">
    <property type="reaction ID" value="UER00010"/>
</dbReference>
<dbReference type="GO" id="GO:0009842">
    <property type="term" value="C:cyanelle"/>
    <property type="evidence" value="ECO:0007669"/>
    <property type="project" value="UniProtKB-SubCell"/>
</dbReference>
<dbReference type="GO" id="GO:0004359">
    <property type="term" value="F:glutaminase activity"/>
    <property type="evidence" value="ECO:0007669"/>
    <property type="project" value="UniProtKB-EC"/>
</dbReference>
<dbReference type="GO" id="GO:0000107">
    <property type="term" value="F:imidazoleglycerol-phosphate synthase activity"/>
    <property type="evidence" value="ECO:0007669"/>
    <property type="project" value="UniProtKB-UniRule"/>
</dbReference>
<dbReference type="GO" id="GO:0016829">
    <property type="term" value="F:lyase activity"/>
    <property type="evidence" value="ECO:0007669"/>
    <property type="project" value="UniProtKB-KW"/>
</dbReference>
<dbReference type="GO" id="GO:0000105">
    <property type="term" value="P:L-histidine biosynthetic process"/>
    <property type="evidence" value="ECO:0007669"/>
    <property type="project" value="UniProtKB-UniRule"/>
</dbReference>
<dbReference type="CDD" id="cd01748">
    <property type="entry name" value="GATase1_IGP_Synthase"/>
    <property type="match status" value="1"/>
</dbReference>
<dbReference type="Gene3D" id="3.40.50.880">
    <property type="match status" value="1"/>
</dbReference>
<dbReference type="HAMAP" id="MF_00278">
    <property type="entry name" value="HisH"/>
    <property type="match status" value="1"/>
</dbReference>
<dbReference type="InterPro" id="IPR029062">
    <property type="entry name" value="Class_I_gatase-like"/>
</dbReference>
<dbReference type="InterPro" id="IPR017926">
    <property type="entry name" value="GATASE"/>
</dbReference>
<dbReference type="InterPro" id="IPR010139">
    <property type="entry name" value="Imidazole-glycPsynth_HisH"/>
</dbReference>
<dbReference type="NCBIfam" id="TIGR01855">
    <property type="entry name" value="IMP_synth_hisH"/>
    <property type="match status" value="1"/>
</dbReference>
<dbReference type="PANTHER" id="PTHR42701">
    <property type="entry name" value="IMIDAZOLE GLYCEROL PHOSPHATE SYNTHASE SUBUNIT HISH"/>
    <property type="match status" value="1"/>
</dbReference>
<dbReference type="PANTHER" id="PTHR42701:SF1">
    <property type="entry name" value="IMIDAZOLE GLYCEROL PHOSPHATE SYNTHASE SUBUNIT HISH"/>
    <property type="match status" value="1"/>
</dbReference>
<dbReference type="Pfam" id="PF00117">
    <property type="entry name" value="GATase"/>
    <property type="match status" value="1"/>
</dbReference>
<dbReference type="PIRSF" id="PIRSF000495">
    <property type="entry name" value="Amidotransf_hisH"/>
    <property type="match status" value="1"/>
</dbReference>
<dbReference type="SUPFAM" id="SSF52317">
    <property type="entry name" value="Class I glutamine amidotransferase-like"/>
    <property type="match status" value="1"/>
</dbReference>
<dbReference type="PROSITE" id="PS51273">
    <property type="entry name" value="GATASE_TYPE_1"/>
    <property type="match status" value="1"/>
</dbReference>
<name>HIS5_CYAPA</name>
<geneLocation type="cyanelle"/>
<proteinExistence type="inferred from homology"/>
<evidence type="ECO:0000250" key="1"/>
<reference key="1">
    <citation type="journal article" date="1995" name="Plant Mol. Biol. Rep.">
        <title>Nucleotide sequence of the cyanelle DNA from Cyanophora paradoxa.</title>
        <authorList>
            <person name="Stirewalt V.L."/>
            <person name="Michalowski C.B."/>
            <person name="Loeffelhardt W."/>
            <person name="Bohnert H.J."/>
            <person name="Bryant D.A."/>
        </authorList>
    </citation>
    <scope>NUCLEOTIDE SEQUENCE [LARGE SCALE GENOMIC DNA]</scope>
    <source>
        <strain>UTEX LB 555 / Pringsheim</strain>
    </source>
</reference>
<reference key="2">
    <citation type="book" date="1997" name="Eukaryotism and symbiosis">
        <title>The complete sequence of the cyanelle genome of Cyanophora paradoxa: the genetic complexity of a primitive plastid.</title>
        <editorList>
            <person name="Schenk H.E.A."/>
            <person name="Herrmann R."/>
            <person name="Jeon K.W."/>
            <person name="Mueller N.E."/>
            <person name="Schwemmler W."/>
        </editorList>
        <authorList>
            <person name="Loeffelhardt W."/>
            <person name="Stirewalt V.L."/>
            <person name="Michalowski C.B."/>
            <person name="Annarella M."/>
            <person name="Farley J.Y."/>
            <person name="Schluchter W.M."/>
            <person name="Chung S."/>
            <person name="Newmann-Spallart C."/>
            <person name="Steiner J.M."/>
            <person name="Jakowitsch J."/>
            <person name="Bohnert H.J."/>
            <person name="Bryant D.A."/>
        </authorList>
    </citation>
    <scope>NUCLEOTIDE SEQUENCE [LARGE SCALE GENOMIC DNA]</scope>
    <source>
        <strain>UTEX LB 555 / Pringsheim</strain>
    </source>
</reference>
<accession>P48262</accession>
<sequence length="215" mass="23795">MINSKNNSPIEISIIDYQMGNLYSVCKGIERSGGIPKIINSAEEIKKATALILPGVGSFDPAMKQLKKQDLINPIKDAISEKKPFLGICLGLHLLFEESEEGIESGLGILSGSVKRIKNEPEITIPHMGWNQLQLTNPKCYLWDGLTKYPWVYFVHSYFAQPKNPNVIAAAVTHGTQQVTAAIQYENISAVQFHPEKSASIGLHMLNNFVQQSCN</sequence>
<keyword id="KW-0028">Amino-acid biosynthesis</keyword>
<keyword id="KW-0194">Cyanelle</keyword>
<keyword id="KW-0315">Glutamine amidotransferase</keyword>
<keyword id="KW-0368">Histidine biosynthesis</keyword>
<keyword id="KW-0378">Hydrolase</keyword>
<keyword id="KW-0456">Lyase</keyword>
<keyword id="KW-0934">Plastid</keyword>
<gene>
    <name type="primary">hisH</name>
</gene>
<feature type="chain" id="PRO_0000152473" description="Imidazole glycerol phosphate synthase subunit hisH">
    <location>
        <begin position="1"/>
        <end position="215"/>
    </location>
</feature>
<feature type="domain" description="Glutamine amidotransferase type-1">
    <location>
        <begin position="11"/>
        <end position="215"/>
    </location>
</feature>
<feature type="active site" description="Nucleophile" evidence="1">
    <location>
        <position position="89"/>
    </location>
</feature>
<feature type="active site" evidence="1">
    <location>
        <position position="194"/>
    </location>
</feature>
<feature type="active site" evidence="1">
    <location>
        <position position="196"/>
    </location>
</feature>